<feature type="chain" id="PRO_0000183969" description="Synaptotagmin-11">
    <location>
        <begin position="1"/>
        <end position="431"/>
    </location>
</feature>
<feature type="topological domain" description="Vesicular" evidence="3">
    <location>
        <begin position="1"/>
        <end position="15"/>
    </location>
</feature>
<feature type="transmembrane region" description="Helical" evidence="3">
    <location>
        <begin position="16"/>
        <end position="36"/>
    </location>
</feature>
<feature type="topological domain" description="Cytoplasmic" evidence="3">
    <location>
        <begin position="37"/>
        <end position="431"/>
    </location>
</feature>
<feature type="domain" description="C2 1" evidence="4">
    <location>
        <begin position="157"/>
        <end position="279"/>
    </location>
</feature>
<feature type="domain" description="C2 2" evidence="4">
    <location>
        <begin position="291"/>
        <end position="426"/>
    </location>
</feature>
<feature type="region of interest" description="Disordered" evidence="5">
    <location>
        <begin position="134"/>
        <end position="154"/>
    </location>
</feature>
<feature type="compositionally biased region" description="Low complexity" evidence="5">
    <location>
        <begin position="140"/>
        <end position="151"/>
    </location>
</feature>
<feature type="binding site" evidence="4">
    <location>
        <position position="250"/>
    </location>
    <ligand>
        <name>Ca(2+)</name>
        <dbReference type="ChEBI" id="CHEBI:29108"/>
    </ligand>
</feature>
<feature type="binding site" evidence="4">
    <location>
        <position position="253"/>
    </location>
    <ligand>
        <name>Ca(2+)</name>
        <dbReference type="ChEBI" id="CHEBI:29108"/>
    </ligand>
</feature>
<feature type="binding site" evidence="4">
    <location>
        <position position="256"/>
    </location>
    <ligand>
        <name>Ca(2+)</name>
        <dbReference type="ChEBI" id="CHEBI:29108"/>
    </ligand>
</feature>
<feature type="modified residue" description="Phosphoserine" evidence="2">
    <location>
        <position position="134"/>
    </location>
</feature>
<feature type="sequence variant" id="VAR_047656" description="In dbSNP:rs822522." evidence="7 8 9 11">
    <original>Q</original>
    <variation>H</variation>
    <location>
        <position position="48"/>
    </location>
</feature>
<feature type="sequence variant" id="VAR_047657" description="In dbSNP:rs17853892." evidence="8">
    <original>G</original>
    <variation>V</variation>
    <location>
        <position position="231"/>
    </location>
</feature>
<feature type="sequence conflict" description="In Ref. 3; BAB55186." evidence="12" ref="3">
    <original>N</original>
    <variation>S</variation>
    <location>
        <position position="50"/>
    </location>
</feature>
<feature type="sequence conflict" description="In Ref. 3; BAB55186." evidence="12" ref="3">
    <original>V</original>
    <variation>A</variation>
    <location>
        <position position="268"/>
    </location>
</feature>
<feature type="sequence conflict" description="In Ref. 4; CAH18653." evidence="12" ref="4">
    <original>F</original>
    <variation>L</variation>
    <location>
        <position position="359"/>
    </location>
</feature>
<feature type="sequence conflict" description="In Ref. 4; CAH18653." evidence="12" ref="4">
    <original>D</original>
    <variation>G</variation>
    <location>
        <position position="370"/>
    </location>
</feature>
<comment type="function">
    <text evidence="2 10">Synaptotagmin family member involved in vesicular and membrane trafficking which does not bind Ca(2+). Inhibits clathrin-mediated and bulk endocytosis, functions to ensure precision in vesicle retrieval. Plays an important role in dopamine transmission by regulating endocytosis and the vesicle-recycling process. Essential component of a neuronal vesicular trafficking pathway that differs from the synaptic vesicle trafficking pathway but is crucial for development and synaptic plasticity. In macrophages and microglia, inhibits the conventional cytokine secretion, of at least IL6 and TNF, and phagocytosis. In astrocytes, regulates lysosome exocytosis, mechanism required for the repair of injured astrocyte cell membrane (By similarity). Required for the ATP13A2-mediated regulation of the autophagy-lysosome pathway (PubMed:27278822).</text>
</comment>
<comment type="cofactor">
    <cofactor evidence="4">
        <name>Ca(2+)</name>
        <dbReference type="ChEBI" id="CHEBI:29108"/>
    </cofactor>
</comment>
<comment type="subunit">
    <text evidence="1 2 6">Homodimer. Can also form heterodimers. Interacts with PRKN (PubMed:12925569). Interacts (via C2 2 domain) with AGO2 and SND1; the interaction with SND1 is direct. Interacts with KIF1A; the interaction increases in presence of calcium (By similarity).</text>
</comment>
<comment type="interaction">
    <interactant intactId="EBI-751770">
        <id>Q9BT88</id>
    </interactant>
    <interactant intactId="EBI-743771">
        <id>Q92624</id>
        <label>APPBP2</label>
    </interactant>
    <organismsDiffer>false</organismsDiffer>
    <experiments>3</experiments>
</comment>
<comment type="interaction">
    <interactant intactId="EBI-751770">
        <id>Q9BT88</id>
    </interactant>
    <interactant intactId="EBI-6308763">
        <id>Q9NQ11</id>
        <label>ATP13A2</label>
    </interactant>
    <organismsDiffer>false</organismsDiffer>
    <experiments>2</experiments>
</comment>
<comment type="interaction">
    <interactant intactId="EBI-751770">
        <id>Q9BT88</id>
    </interactant>
    <interactant intactId="EBI-21251460">
        <id>O60260-5</id>
        <label>PRKN</label>
    </interactant>
    <organismsDiffer>false</organismsDiffer>
    <experiments>6</experiments>
</comment>
<comment type="interaction">
    <interactant intactId="EBI-751770">
        <id>Q9BT88</id>
    </interactant>
    <interactant intactId="EBI-347996">
        <id>O43765</id>
        <label>SGTA</label>
    </interactant>
    <organismsDiffer>false</organismsDiffer>
    <experiments>7</experiments>
</comment>
<comment type="interaction">
    <interactant intactId="EBI-751770">
        <id>Q9BT88</id>
    </interactant>
    <interactant intactId="EBI-744081">
        <id>Q96EQ0</id>
        <label>SGTB</label>
    </interactant>
    <organismsDiffer>false</organismsDiffer>
    <experiments>3</experiments>
</comment>
<comment type="subcellular location">
    <subcellularLocation>
        <location evidence="13">Cytoplasmic vesicle membrane</location>
        <topology evidence="12">Single-pass membrane protein</topology>
    </subcellularLocation>
    <subcellularLocation>
        <location evidence="2">Perikaryon</location>
    </subcellularLocation>
    <subcellularLocation>
        <location evidence="2">Golgi apparatus</location>
        <location evidence="2">trans-Golgi network membrane</location>
        <topology evidence="2">Single-pass membrane protein</topology>
    </subcellularLocation>
    <subcellularLocation>
        <location evidence="2">Recycling endosome membrane</location>
        <topology evidence="2">Single-pass membrane protein</topology>
    </subcellularLocation>
    <subcellularLocation>
        <location evidence="2">Lysosome membrane</location>
        <topology evidence="2">Single-pass membrane protein</topology>
    </subcellularLocation>
    <subcellularLocation>
        <location evidence="2">Cytoplasmic vesicle</location>
        <location evidence="2">Phagosome</location>
    </subcellularLocation>
    <subcellularLocation>
        <location evidence="6">Cell projection</location>
        <location evidence="6">Axon</location>
    </subcellularLocation>
    <subcellularLocation>
        <location evidence="6">Cell projection</location>
        <location evidence="6">Dendrite</location>
    </subcellularLocation>
    <subcellularLocation>
        <location evidence="2">Postsynaptic density</location>
    </subcellularLocation>
    <subcellularLocation>
        <location evidence="1">Recycling endosome membrane</location>
        <topology evidence="1">Single-pass membrane protein</topology>
    </subcellularLocation>
    <subcellularLocation>
        <location evidence="1">Cytoplasmic vesicle</location>
        <location evidence="1">Clathrin-coated vesicle membrane</location>
        <topology evidence="1">Single-pass membrane protein</topology>
    </subcellularLocation>
    <subcellularLocation>
        <location evidence="6">Perikaryon</location>
    </subcellularLocation>
    <text evidence="2 6">Localized in vesicles that travels in axonal and dendritic shafts in both anterograde and retrograde directions. In macrophages and microglia, recruited in phagosomes at early stages of phagocytosis (By similarity). Found in the core of the Lewy bodies in the brain of sporadic Parkinson disease patients (PubMed:12925569).</text>
</comment>
<comment type="domain">
    <text evidence="1">The second C2 domain/C2B is required for the inhibitory role in both clathrin-mediated and bulk endocytosis. The transmembrane domain and the first C2 domain/C2A are critical for the inhibitory role in clathrin-mediated endocytosis or bulk endocytosis, respectively.</text>
</comment>
<comment type="domain">
    <text evidence="1">Unlike in other synaptotagmin family members, the first C2 domain/C2A does not bind Ca(2+) neither mediates Ca(2+)-dependent phospholipid binding. An aspartate-to-serine substitution in this domain inactivates Ca(2+)/phospho-lipid binding.</text>
</comment>
<comment type="PTM">
    <text evidence="6 10">Ubiquitinated, at least by PRKN, and targeted to the proteasome complex for degradation (PubMed:12925569, PubMed:27278822). Ubiquitination is inhibited by ATP13A2 (PubMed:27278822).</text>
</comment>
<comment type="similarity">
    <text evidence="12">Belongs to the synaptotagmin family.</text>
</comment>
<comment type="sequence caution" evidence="12">
    <conflict type="erroneous initiation">
        <sequence resource="EMBL-CDS" id="BAA07527"/>
    </conflict>
    <text>Extended N-terminus.</text>
</comment>
<reference key="1">
    <citation type="journal article" date="1994" name="DNA Res.">
        <title>Prediction of the coding sequences of unidentified human genes. II. The coding sequences of 40 new genes (KIAA0041-KIAA0080) deduced by analysis of cDNA clones from human cell line KG-1.</title>
        <authorList>
            <person name="Nomura N."/>
            <person name="Nagase T."/>
            <person name="Miyajima N."/>
            <person name="Sazuka T."/>
            <person name="Tanaka A."/>
            <person name="Sato S."/>
            <person name="Seki N."/>
            <person name="Kawarabayasi Y."/>
            <person name="Ishikawa K."/>
            <person name="Tabata S."/>
        </authorList>
    </citation>
    <scope>NUCLEOTIDE SEQUENCE [LARGE SCALE MRNA]</scope>
    <scope>VARIANT HIS-48</scope>
    <source>
        <tissue>Bone marrow</tissue>
    </source>
</reference>
<reference key="2">
    <citation type="submission" date="2005-01" db="EMBL/GenBank/DDBJ databases">
        <authorList>
            <person name="Ohara O."/>
            <person name="Nagase T."/>
            <person name="Kikuno R."/>
            <person name="Nomura N."/>
        </authorList>
    </citation>
    <scope>SEQUENCE REVISION</scope>
</reference>
<reference key="3">
    <citation type="journal article" date="2004" name="Nat. Genet.">
        <title>Complete sequencing and characterization of 21,243 full-length human cDNAs.</title>
        <authorList>
            <person name="Ota T."/>
            <person name="Suzuki Y."/>
            <person name="Nishikawa T."/>
            <person name="Otsuki T."/>
            <person name="Sugiyama T."/>
            <person name="Irie R."/>
            <person name="Wakamatsu A."/>
            <person name="Hayashi K."/>
            <person name="Sato H."/>
            <person name="Nagai K."/>
            <person name="Kimura K."/>
            <person name="Makita H."/>
            <person name="Sekine M."/>
            <person name="Obayashi M."/>
            <person name="Nishi T."/>
            <person name="Shibahara T."/>
            <person name="Tanaka T."/>
            <person name="Ishii S."/>
            <person name="Yamamoto J."/>
            <person name="Saito K."/>
            <person name="Kawai Y."/>
            <person name="Isono Y."/>
            <person name="Nakamura Y."/>
            <person name="Nagahari K."/>
            <person name="Murakami K."/>
            <person name="Yasuda T."/>
            <person name="Iwayanagi T."/>
            <person name="Wagatsuma M."/>
            <person name="Shiratori A."/>
            <person name="Sudo H."/>
            <person name="Hosoiri T."/>
            <person name="Kaku Y."/>
            <person name="Kodaira H."/>
            <person name="Kondo H."/>
            <person name="Sugawara M."/>
            <person name="Takahashi M."/>
            <person name="Kanda K."/>
            <person name="Yokoi T."/>
            <person name="Furuya T."/>
            <person name="Kikkawa E."/>
            <person name="Omura Y."/>
            <person name="Abe K."/>
            <person name="Kamihara K."/>
            <person name="Katsuta N."/>
            <person name="Sato K."/>
            <person name="Tanikawa M."/>
            <person name="Yamazaki M."/>
            <person name="Ninomiya K."/>
            <person name="Ishibashi T."/>
            <person name="Yamashita H."/>
            <person name="Murakawa K."/>
            <person name="Fujimori K."/>
            <person name="Tanai H."/>
            <person name="Kimata M."/>
            <person name="Watanabe M."/>
            <person name="Hiraoka S."/>
            <person name="Chiba Y."/>
            <person name="Ishida S."/>
            <person name="Ono Y."/>
            <person name="Takiguchi S."/>
            <person name="Watanabe S."/>
            <person name="Yosida M."/>
            <person name="Hotuta T."/>
            <person name="Kusano J."/>
            <person name="Kanehori K."/>
            <person name="Takahashi-Fujii A."/>
            <person name="Hara H."/>
            <person name="Tanase T.-O."/>
            <person name="Nomura Y."/>
            <person name="Togiya S."/>
            <person name="Komai F."/>
            <person name="Hara R."/>
            <person name="Takeuchi K."/>
            <person name="Arita M."/>
            <person name="Imose N."/>
            <person name="Musashino K."/>
            <person name="Yuuki H."/>
            <person name="Oshima A."/>
            <person name="Sasaki N."/>
            <person name="Aotsuka S."/>
            <person name="Yoshikawa Y."/>
            <person name="Matsunawa H."/>
            <person name="Ichihara T."/>
            <person name="Shiohata N."/>
            <person name="Sano S."/>
            <person name="Moriya S."/>
            <person name="Momiyama H."/>
            <person name="Satoh N."/>
            <person name="Takami S."/>
            <person name="Terashima Y."/>
            <person name="Suzuki O."/>
            <person name="Nakagawa S."/>
            <person name="Senoh A."/>
            <person name="Mizoguchi H."/>
            <person name="Goto Y."/>
            <person name="Shimizu F."/>
            <person name="Wakebe H."/>
            <person name="Hishigaki H."/>
            <person name="Watanabe T."/>
            <person name="Sugiyama A."/>
            <person name="Takemoto M."/>
            <person name="Kawakami B."/>
            <person name="Yamazaki M."/>
            <person name="Watanabe K."/>
            <person name="Kumagai A."/>
            <person name="Itakura S."/>
            <person name="Fukuzumi Y."/>
            <person name="Fujimori Y."/>
            <person name="Komiyama M."/>
            <person name="Tashiro H."/>
            <person name="Tanigami A."/>
            <person name="Fujiwara T."/>
            <person name="Ono T."/>
            <person name="Yamada K."/>
            <person name="Fujii Y."/>
            <person name="Ozaki K."/>
            <person name="Hirao M."/>
            <person name="Ohmori Y."/>
            <person name="Kawabata A."/>
            <person name="Hikiji T."/>
            <person name="Kobatake N."/>
            <person name="Inagaki H."/>
            <person name="Ikema Y."/>
            <person name="Okamoto S."/>
            <person name="Okitani R."/>
            <person name="Kawakami T."/>
            <person name="Noguchi S."/>
            <person name="Itoh T."/>
            <person name="Shigeta K."/>
            <person name="Senba T."/>
            <person name="Matsumura K."/>
            <person name="Nakajima Y."/>
            <person name="Mizuno T."/>
            <person name="Morinaga M."/>
            <person name="Sasaki M."/>
            <person name="Togashi T."/>
            <person name="Oyama M."/>
            <person name="Hata H."/>
            <person name="Watanabe M."/>
            <person name="Komatsu T."/>
            <person name="Mizushima-Sugano J."/>
            <person name="Satoh T."/>
            <person name="Shirai Y."/>
            <person name="Takahashi Y."/>
            <person name="Nakagawa K."/>
            <person name="Okumura K."/>
            <person name="Nagase T."/>
            <person name="Nomura N."/>
            <person name="Kikuchi H."/>
            <person name="Masuho Y."/>
            <person name="Yamashita R."/>
            <person name="Nakai K."/>
            <person name="Yada T."/>
            <person name="Nakamura Y."/>
            <person name="Ohara O."/>
            <person name="Isogai T."/>
            <person name="Sugano S."/>
        </authorList>
    </citation>
    <scope>NUCLEOTIDE SEQUENCE [LARGE SCALE MRNA]</scope>
    <scope>VARIANT HIS-48</scope>
</reference>
<reference key="4">
    <citation type="journal article" date="2007" name="BMC Genomics">
        <title>The full-ORF clone resource of the German cDNA consortium.</title>
        <authorList>
            <person name="Bechtel S."/>
            <person name="Rosenfelder H."/>
            <person name="Duda A."/>
            <person name="Schmidt C.P."/>
            <person name="Ernst U."/>
            <person name="Wellenreuther R."/>
            <person name="Mehrle A."/>
            <person name="Schuster C."/>
            <person name="Bahr A."/>
            <person name="Bloecker H."/>
            <person name="Heubner D."/>
            <person name="Hoerlein A."/>
            <person name="Michel G."/>
            <person name="Wedler H."/>
            <person name="Koehrer K."/>
            <person name="Ottenwaelder B."/>
            <person name="Poustka A."/>
            <person name="Wiemann S."/>
            <person name="Schupp I."/>
        </authorList>
    </citation>
    <scope>NUCLEOTIDE SEQUENCE [LARGE SCALE MRNA]</scope>
    <scope>VARIANT HIS-48</scope>
    <source>
        <tissue>Amygdala</tissue>
    </source>
</reference>
<reference key="5">
    <citation type="journal article" date="2006" name="Nature">
        <title>The DNA sequence and biological annotation of human chromosome 1.</title>
        <authorList>
            <person name="Gregory S.G."/>
            <person name="Barlow K.F."/>
            <person name="McLay K.E."/>
            <person name="Kaul R."/>
            <person name="Swarbreck D."/>
            <person name="Dunham A."/>
            <person name="Scott C.E."/>
            <person name="Howe K.L."/>
            <person name="Woodfine K."/>
            <person name="Spencer C.C.A."/>
            <person name="Jones M.C."/>
            <person name="Gillson C."/>
            <person name="Searle S."/>
            <person name="Zhou Y."/>
            <person name="Kokocinski F."/>
            <person name="McDonald L."/>
            <person name="Evans R."/>
            <person name="Phillips K."/>
            <person name="Atkinson A."/>
            <person name="Cooper R."/>
            <person name="Jones C."/>
            <person name="Hall R.E."/>
            <person name="Andrews T.D."/>
            <person name="Lloyd C."/>
            <person name="Ainscough R."/>
            <person name="Almeida J.P."/>
            <person name="Ambrose K.D."/>
            <person name="Anderson F."/>
            <person name="Andrew R.W."/>
            <person name="Ashwell R.I.S."/>
            <person name="Aubin K."/>
            <person name="Babbage A.K."/>
            <person name="Bagguley C.L."/>
            <person name="Bailey J."/>
            <person name="Beasley H."/>
            <person name="Bethel G."/>
            <person name="Bird C.P."/>
            <person name="Bray-Allen S."/>
            <person name="Brown J.Y."/>
            <person name="Brown A.J."/>
            <person name="Buckley D."/>
            <person name="Burton J."/>
            <person name="Bye J."/>
            <person name="Carder C."/>
            <person name="Chapman J.C."/>
            <person name="Clark S.Y."/>
            <person name="Clarke G."/>
            <person name="Clee C."/>
            <person name="Cobley V."/>
            <person name="Collier R.E."/>
            <person name="Corby N."/>
            <person name="Coville G.J."/>
            <person name="Davies J."/>
            <person name="Deadman R."/>
            <person name="Dunn M."/>
            <person name="Earthrowl M."/>
            <person name="Ellington A.G."/>
            <person name="Errington H."/>
            <person name="Frankish A."/>
            <person name="Frankland J."/>
            <person name="French L."/>
            <person name="Garner P."/>
            <person name="Garnett J."/>
            <person name="Gay L."/>
            <person name="Ghori M.R.J."/>
            <person name="Gibson R."/>
            <person name="Gilby L.M."/>
            <person name="Gillett W."/>
            <person name="Glithero R.J."/>
            <person name="Grafham D.V."/>
            <person name="Griffiths C."/>
            <person name="Griffiths-Jones S."/>
            <person name="Grocock R."/>
            <person name="Hammond S."/>
            <person name="Harrison E.S.I."/>
            <person name="Hart E."/>
            <person name="Haugen E."/>
            <person name="Heath P.D."/>
            <person name="Holmes S."/>
            <person name="Holt K."/>
            <person name="Howden P.J."/>
            <person name="Hunt A.R."/>
            <person name="Hunt S.E."/>
            <person name="Hunter G."/>
            <person name="Isherwood J."/>
            <person name="James R."/>
            <person name="Johnson C."/>
            <person name="Johnson D."/>
            <person name="Joy A."/>
            <person name="Kay M."/>
            <person name="Kershaw J.K."/>
            <person name="Kibukawa M."/>
            <person name="Kimberley A.M."/>
            <person name="King A."/>
            <person name="Knights A.J."/>
            <person name="Lad H."/>
            <person name="Laird G."/>
            <person name="Lawlor S."/>
            <person name="Leongamornlert D.A."/>
            <person name="Lloyd D.M."/>
            <person name="Loveland J."/>
            <person name="Lovell J."/>
            <person name="Lush M.J."/>
            <person name="Lyne R."/>
            <person name="Martin S."/>
            <person name="Mashreghi-Mohammadi M."/>
            <person name="Matthews L."/>
            <person name="Matthews N.S.W."/>
            <person name="McLaren S."/>
            <person name="Milne S."/>
            <person name="Mistry S."/>
            <person name="Moore M.J.F."/>
            <person name="Nickerson T."/>
            <person name="O'Dell C.N."/>
            <person name="Oliver K."/>
            <person name="Palmeiri A."/>
            <person name="Palmer S.A."/>
            <person name="Parker A."/>
            <person name="Patel D."/>
            <person name="Pearce A.V."/>
            <person name="Peck A.I."/>
            <person name="Pelan S."/>
            <person name="Phelps K."/>
            <person name="Phillimore B.J."/>
            <person name="Plumb R."/>
            <person name="Rajan J."/>
            <person name="Raymond C."/>
            <person name="Rouse G."/>
            <person name="Saenphimmachak C."/>
            <person name="Sehra H.K."/>
            <person name="Sheridan E."/>
            <person name="Shownkeen R."/>
            <person name="Sims S."/>
            <person name="Skuce C.D."/>
            <person name="Smith M."/>
            <person name="Steward C."/>
            <person name="Subramanian S."/>
            <person name="Sycamore N."/>
            <person name="Tracey A."/>
            <person name="Tromans A."/>
            <person name="Van Helmond Z."/>
            <person name="Wall M."/>
            <person name="Wallis J.M."/>
            <person name="White S."/>
            <person name="Whitehead S.L."/>
            <person name="Wilkinson J.E."/>
            <person name="Willey D.L."/>
            <person name="Williams H."/>
            <person name="Wilming L."/>
            <person name="Wray P.W."/>
            <person name="Wu Z."/>
            <person name="Coulson A."/>
            <person name="Vaudin M."/>
            <person name="Sulston J.E."/>
            <person name="Durbin R.M."/>
            <person name="Hubbard T."/>
            <person name="Wooster R."/>
            <person name="Dunham I."/>
            <person name="Carter N.P."/>
            <person name="McVean G."/>
            <person name="Ross M.T."/>
            <person name="Harrow J."/>
            <person name="Olson M.V."/>
            <person name="Beck S."/>
            <person name="Rogers J."/>
            <person name="Bentley D.R."/>
        </authorList>
    </citation>
    <scope>NUCLEOTIDE SEQUENCE [LARGE SCALE GENOMIC DNA]</scope>
</reference>
<reference key="6">
    <citation type="journal article" date="2004" name="Genome Res.">
        <title>The status, quality, and expansion of the NIH full-length cDNA project: the Mammalian Gene Collection (MGC).</title>
        <authorList>
            <consortium name="The MGC Project Team"/>
        </authorList>
    </citation>
    <scope>NUCLEOTIDE SEQUENCE [LARGE SCALE MRNA]</scope>
    <scope>VARIANTS HIS-48 AND VAL-231</scope>
    <source>
        <tissue>Brain</tissue>
        <tissue>Lymph</tissue>
    </source>
</reference>
<reference key="7">
    <citation type="journal article" date="2003" name="Hum. Mol. Genet.">
        <title>The autosomal recessive juvenile Parkinson disease gene product, parkin, interacts with and ubiquitinates synaptotagmin XI.</title>
        <authorList>
            <person name="Huynh D.P."/>
            <person name="Scoles D.R."/>
            <person name="Nguyen D."/>
            <person name="Pulst S.M."/>
        </authorList>
    </citation>
    <scope>INTERACTION WITH PRKN</scope>
    <scope>UBIQUITINATION</scope>
    <scope>SUBCELLULAR LOCATION</scope>
</reference>
<reference key="8">
    <citation type="journal article" date="2016" name="Nat. Commun.">
        <title>The Parkinson's disease-associated genes ATP13A2 and SYT11 regulate autophagy via a common pathway.</title>
        <authorList>
            <person name="Bento C.F."/>
            <person name="Ashkenazi A."/>
            <person name="Jimenez-Sanchez M."/>
            <person name="Rubinsztein D.C."/>
        </authorList>
    </citation>
    <scope>FUNCTION</scope>
    <scope>UBIQUITINATION</scope>
</reference>
<evidence type="ECO:0000250" key="1">
    <source>
        <dbReference type="UniProtKB" id="O08835"/>
    </source>
</evidence>
<evidence type="ECO:0000250" key="2">
    <source>
        <dbReference type="UniProtKB" id="Q9R0N3"/>
    </source>
</evidence>
<evidence type="ECO:0000255" key="3"/>
<evidence type="ECO:0000255" key="4">
    <source>
        <dbReference type="PROSITE-ProRule" id="PRU00041"/>
    </source>
</evidence>
<evidence type="ECO:0000256" key="5">
    <source>
        <dbReference type="SAM" id="MobiDB-lite"/>
    </source>
</evidence>
<evidence type="ECO:0000269" key="6">
    <source>
    </source>
</evidence>
<evidence type="ECO:0000269" key="7">
    <source>
    </source>
</evidence>
<evidence type="ECO:0000269" key="8">
    <source>
    </source>
</evidence>
<evidence type="ECO:0000269" key="9">
    <source>
    </source>
</evidence>
<evidence type="ECO:0000269" key="10">
    <source>
    </source>
</evidence>
<evidence type="ECO:0000269" key="11">
    <source>
    </source>
</evidence>
<evidence type="ECO:0000305" key="12"/>
<evidence type="ECO:0000305" key="13">
    <source>
    </source>
</evidence>
<evidence type="ECO:0000312" key="14">
    <source>
        <dbReference type="HGNC" id="HGNC:19239"/>
    </source>
</evidence>
<name>SYT11_HUMAN</name>
<dbReference type="EMBL" id="D38522">
    <property type="protein sequence ID" value="BAA07527.2"/>
    <property type="status" value="ALT_INIT"/>
    <property type="molecule type" value="mRNA"/>
</dbReference>
<dbReference type="EMBL" id="AK027540">
    <property type="protein sequence ID" value="BAB55186.1"/>
    <property type="molecule type" value="mRNA"/>
</dbReference>
<dbReference type="EMBL" id="AK074931">
    <property type="protein sequence ID" value="BAC11300.1"/>
    <property type="molecule type" value="mRNA"/>
</dbReference>
<dbReference type="EMBL" id="CR749792">
    <property type="protein sequence ID" value="CAH18653.1"/>
    <property type="molecule type" value="mRNA"/>
</dbReference>
<dbReference type="EMBL" id="AL139128">
    <property type="status" value="NOT_ANNOTATED_CDS"/>
    <property type="molecule type" value="Genomic_DNA"/>
</dbReference>
<dbReference type="EMBL" id="BC004291">
    <property type="protein sequence ID" value="AAH04291.1"/>
    <property type="molecule type" value="mRNA"/>
</dbReference>
<dbReference type="EMBL" id="BC013690">
    <property type="protein sequence ID" value="AAH13690.1"/>
    <property type="molecule type" value="mRNA"/>
</dbReference>
<dbReference type="EMBL" id="BC039205">
    <property type="protein sequence ID" value="AAH39205.1"/>
    <property type="molecule type" value="mRNA"/>
</dbReference>
<dbReference type="CCDS" id="CCDS1122.1"/>
<dbReference type="RefSeq" id="NP_689493.3">
    <property type="nucleotide sequence ID" value="NM_152280.4"/>
</dbReference>
<dbReference type="SMR" id="Q9BT88"/>
<dbReference type="BioGRID" id="116815">
    <property type="interactions" value="30"/>
</dbReference>
<dbReference type="ELM" id="Q9BT88"/>
<dbReference type="FunCoup" id="Q9BT88">
    <property type="interactions" value="625"/>
</dbReference>
<dbReference type="IntAct" id="Q9BT88">
    <property type="interactions" value="31"/>
</dbReference>
<dbReference type="MINT" id="Q9BT88"/>
<dbReference type="STRING" id="9606.ENSP00000357307"/>
<dbReference type="iPTMnet" id="Q9BT88"/>
<dbReference type="PhosphoSitePlus" id="Q9BT88"/>
<dbReference type="SwissPalm" id="Q9BT88"/>
<dbReference type="BioMuta" id="SYT11"/>
<dbReference type="DMDM" id="215273917"/>
<dbReference type="jPOST" id="Q9BT88"/>
<dbReference type="MassIVE" id="Q9BT88"/>
<dbReference type="PaxDb" id="9606-ENSP00000357307"/>
<dbReference type="PeptideAtlas" id="Q9BT88"/>
<dbReference type="ProteomicsDB" id="78960"/>
<dbReference type="Antibodypedia" id="34201">
    <property type="antibodies" value="204 antibodies from 29 providers"/>
</dbReference>
<dbReference type="DNASU" id="23208"/>
<dbReference type="Ensembl" id="ENST00000368324.5">
    <property type="protein sequence ID" value="ENSP00000357307.4"/>
    <property type="gene ID" value="ENSG00000132718.9"/>
</dbReference>
<dbReference type="GeneID" id="23208"/>
<dbReference type="KEGG" id="hsa:23208"/>
<dbReference type="MANE-Select" id="ENST00000368324.5">
    <property type="protein sequence ID" value="ENSP00000357307.4"/>
    <property type="RefSeq nucleotide sequence ID" value="NM_152280.5"/>
    <property type="RefSeq protein sequence ID" value="NP_689493.3"/>
</dbReference>
<dbReference type="UCSC" id="uc001fmg.4">
    <property type="organism name" value="human"/>
</dbReference>
<dbReference type="AGR" id="HGNC:19239"/>
<dbReference type="CTD" id="23208"/>
<dbReference type="DisGeNET" id="23208"/>
<dbReference type="GeneCards" id="SYT11"/>
<dbReference type="HGNC" id="HGNC:19239">
    <property type="gene designation" value="SYT11"/>
</dbReference>
<dbReference type="HPA" id="ENSG00000132718">
    <property type="expression patterns" value="Group enriched (brain, retina)"/>
</dbReference>
<dbReference type="MIM" id="608741">
    <property type="type" value="gene"/>
</dbReference>
<dbReference type="neXtProt" id="NX_Q9BT88"/>
<dbReference type="OpenTargets" id="ENSG00000132718"/>
<dbReference type="PharmGKB" id="PA134898675"/>
<dbReference type="VEuPathDB" id="HostDB:ENSG00000132718"/>
<dbReference type="eggNOG" id="KOG1028">
    <property type="taxonomic scope" value="Eukaryota"/>
</dbReference>
<dbReference type="GeneTree" id="ENSGT00940000159088"/>
<dbReference type="HOGENOM" id="CLU_023008_7_3_1"/>
<dbReference type="InParanoid" id="Q9BT88"/>
<dbReference type="OMA" id="MDEQNQG"/>
<dbReference type="OrthoDB" id="270970at2759"/>
<dbReference type="PAN-GO" id="Q9BT88">
    <property type="GO annotations" value="14 GO annotations based on evolutionary models"/>
</dbReference>
<dbReference type="PhylomeDB" id="Q9BT88"/>
<dbReference type="TreeFam" id="TF315600"/>
<dbReference type="PathwayCommons" id="Q9BT88"/>
<dbReference type="Reactome" id="R-HSA-8856825">
    <property type="pathway name" value="Cargo recognition for clathrin-mediated endocytosis"/>
</dbReference>
<dbReference type="Reactome" id="R-HSA-8856828">
    <property type="pathway name" value="Clathrin-mediated endocytosis"/>
</dbReference>
<dbReference type="SignaLink" id="Q9BT88"/>
<dbReference type="SIGNOR" id="Q9BT88"/>
<dbReference type="BioGRID-ORCS" id="23208">
    <property type="hits" value="25 hits in 1141 CRISPR screens"/>
</dbReference>
<dbReference type="ChiTaRS" id="SYT11">
    <property type="organism name" value="human"/>
</dbReference>
<dbReference type="GeneWiki" id="SYT11"/>
<dbReference type="GenomeRNAi" id="23208"/>
<dbReference type="Pharos" id="Q9BT88">
    <property type="development level" value="Tbio"/>
</dbReference>
<dbReference type="PRO" id="PR:Q9BT88"/>
<dbReference type="Proteomes" id="UP000005640">
    <property type="component" value="Chromosome 1"/>
</dbReference>
<dbReference type="RNAct" id="Q9BT88">
    <property type="molecule type" value="protein"/>
</dbReference>
<dbReference type="Bgee" id="ENSG00000132718">
    <property type="expression patterns" value="Expressed in ventricular zone and 165 other cell types or tissues"/>
</dbReference>
<dbReference type="GO" id="GO:0030424">
    <property type="term" value="C:axon"/>
    <property type="evidence" value="ECO:0000250"/>
    <property type="project" value="ParkinsonsUK-UCL"/>
</dbReference>
<dbReference type="GO" id="GO:0030665">
    <property type="term" value="C:clathrin-coated vesicle membrane"/>
    <property type="evidence" value="ECO:0007669"/>
    <property type="project" value="UniProtKB-SubCell"/>
</dbReference>
<dbReference type="GO" id="GO:0030425">
    <property type="term" value="C:dendrite"/>
    <property type="evidence" value="ECO:0000250"/>
    <property type="project" value="UniProtKB"/>
</dbReference>
<dbReference type="GO" id="GO:0043197">
    <property type="term" value="C:dendritic spine"/>
    <property type="evidence" value="ECO:0000250"/>
    <property type="project" value="ParkinsonsUK-UCL"/>
</dbReference>
<dbReference type="GO" id="GO:0098691">
    <property type="term" value="C:dopaminergic synapse"/>
    <property type="evidence" value="ECO:0007669"/>
    <property type="project" value="Ensembl"/>
</dbReference>
<dbReference type="GO" id="GO:0032009">
    <property type="term" value="C:early phagosome"/>
    <property type="evidence" value="ECO:0000250"/>
    <property type="project" value="UniProtKB"/>
</dbReference>
<dbReference type="GO" id="GO:0060076">
    <property type="term" value="C:excitatory synapse"/>
    <property type="evidence" value="ECO:0000250"/>
    <property type="project" value="ParkinsonsUK-UCL"/>
</dbReference>
<dbReference type="GO" id="GO:0070382">
    <property type="term" value="C:exocytic vesicle"/>
    <property type="evidence" value="ECO:0000318"/>
    <property type="project" value="GO_Central"/>
</dbReference>
<dbReference type="GO" id="GO:0060077">
    <property type="term" value="C:inhibitory synapse"/>
    <property type="evidence" value="ECO:0000250"/>
    <property type="project" value="ParkinsonsUK-UCL"/>
</dbReference>
<dbReference type="GO" id="GO:0005765">
    <property type="term" value="C:lysosomal membrane"/>
    <property type="evidence" value="ECO:0007669"/>
    <property type="project" value="UniProtKB-SubCell"/>
</dbReference>
<dbReference type="GO" id="GO:0005764">
    <property type="term" value="C:lysosome"/>
    <property type="evidence" value="ECO:0000250"/>
    <property type="project" value="UniProtKB"/>
</dbReference>
<dbReference type="GO" id="GO:0043005">
    <property type="term" value="C:neuron projection"/>
    <property type="evidence" value="ECO:0000314"/>
    <property type="project" value="ParkinsonsUK-UCL"/>
</dbReference>
<dbReference type="GO" id="GO:0043204">
    <property type="term" value="C:perikaryon"/>
    <property type="evidence" value="ECO:0007669"/>
    <property type="project" value="UniProtKB-SubCell"/>
</dbReference>
<dbReference type="GO" id="GO:0001891">
    <property type="term" value="C:phagocytic cup"/>
    <property type="evidence" value="ECO:0007669"/>
    <property type="project" value="Ensembl"/>
</dbReference>
<dbReference type="GO" id="GO:0045335">
    <property type="term" value="C:phagocytic vesicle"/>
    <property type="evidence" value="ECO:0000250"/>
    <property type="project" value="ParkinsonsUK-UCL"/>
</dbReference>
<dbReference type="GO" id="GO:0005886">
    <property type="term" value="C:plasma membrane"/>
    <property type="evidence" value="ECO:0000318"/>
    <property type="project" value="GO_Central"/>
</dbReference>
<dbReference type="GO" id="GO:0014069">
    <property type="term" value="C:postsynaptic density"/>
    <property type="evidence" value="ECO:0000250"/>
    <property type="project" value="UniProtKB"/>
</dbReference>
<dbReference type="GO" id="GO:0098793">
    <property type="term" value="C:presynapse"/>
    <property type="evidence" value="ECO:0000250"/>
    <property type="project" value="ParkinsonsUK-UCL"/>
</dbReference>
<dbReference type="GO" id="GO:0048787">
    <property type="term" value="C:presynaptic active zone membrane"/>
    <property type="evidence" value="ECO:0000250"/>
    <property type="project" value="ParkinsonsUK-UCL"/>
</dbReference>
<dbReference type="GO" id="GO:0055037">
    <property type="term" value="C:recycling endosome"/>
    <property type="evidence" value="ECO:0000250"/>
    <property type="project" value="UniProtKB"/>
</dbReference>
<dbReference type="GO" id="GO:0055038">
    <property type="term" value="C:recycling endosome membrane"/>
    <property type="evidence" value="ECO:0007669"/>
    <property type="project" value="UniProtKB-SubCell"/>
</dbReference>
<dbReference type="GO" id="GO:0045202">
    <property type="term" value="C:synapse"/>
    <property type="evidence" value="ECO:0000318"/>
    <property type="project" value="GO_Central"/>
</dbReference>
<dbReference type="GO" id="GO:0008021">
    <property type="term" value="C:synaptic vesicle"/>
    <property type="evidence" value="ECO:0000250"/>
    <property type="project" value="ParkinsonsUK-UCL"/>
</dbReference>
<dbReference type="GO" id="GO:0005802">
    <property type="term" value="C:trans-Golgi network"/>
    <property type="evidence" value="ECO:0000250"/>
    <property type="project" value="UniProtKB"/>
</dbReference>
<dbReference type="GO" id="GO:0031982">
    <property type="term" value="C:vesicle"/>
    <property type="evidence" value="ECO:0000250"/>
    <property type="project" value="UniProtKB"/>
</dbReference>
<dbReference type="GO" id="GO:0048487">
    <property type="term" value="F:beta-tubulin binding"/>
    <property type="evidence" value="ECO:0007669"/>
    <property type="project" value="Ensembl"/>
</dbReference>
<dbReference type="GO" id="GO:0061891">
    <property type="term" value="F:calcium ion sensor activity"/>
    <property type="evidence" value="ECO:0000318"/>
    <property type="project" value="GO_Central"/>
</dbReference>
<dbReference type="GO" id="GO:0005544">
    <property type="term" value="F:calcium-dependent phospholipid binding"/>
    <property type="evidence" value="ECO:0000318"/>
    <property type="project" value="GO_Central"/>
</dbReference>
<dbReference type="GO" id="GO:0042802">
    <property type="term" value="F:identical protein binding"/>
    <property type="evidence" value="ECO:0000250"/>
    <property type="project" value="ParkinsonsUK-UCL"/>
</dbReference>
<dbReference type="GO" id="GO:0046872">
    <property type="term" value="F:metal ion binding"/>
    <property type="evidence" value="ECO:0007669"/>
    <property type="project" value="UniProtKB-KW"/>
</dbReference>
<dbReference type="GO" id="GO:0000149">
    <property type="term" value="F:SNARE binding"/>
    <property type="evidence" value="ECO:0000318"/>
    <property type="project" value="GO_Central"/>
</dbReference>
<dbReference type="GO" id="GO:0031369">
    <property type="term" value="F:translation initiation factor binding"/>
    <property type="evidence" value="ECO:0007669"/>
    <property type="project" value="Ensembl"/>
</dbReference>
<dbReference type="GO" id="GO:0031625">
    <property type="term" value="F:ubiquitin protein ligase binding"/>
    <property type="evidence" value="ECO:0000353"/>
    <property type="project" value="ParkinsonsUK-UCL"/>
</dbReference>
<dbReference type="GO" id="GO:0006914">
    <property type="term" value="P:autophagy"/>
    <property type="evidence" value="ECO:0000315"/>
    <property type="project" value="UniProtKB"/>
</dbReference>
<dbReference type="GO" id="GO:1990927">
    <property type="term" value="P:calcium ion regulated lysosome exocytosis"/>
    <property type="evidence" value="ECO:0000250"/>
    <property type="project" value="ParkinsonsUK-UCL"/>
</dbReference>
<dbReference type="GO" id="GO:0099502">
    <property type="term" value="P:calcium-dependent activation of synaptic vesicle fusion"/>
    <property type="evidence" value="ECO:0000318"/>
    <property type="project" value="GO_Central"/>
</dbReference>
<dbReference type="GO" id="GO:0051650">
    <property type="term" value="P:establishment of vesicle localization"/>
    <property type="evidence" value="ECO:0000250"/>
    <property type="project" value="UniProtKB"/>
</dbReference>
<dbReference type="GO" id="GO:0007612">
    <property type="term" value="P:learning"/>
    <property type="evidence" value="ECO:0000250"/>
    <property type="project" value="UniProtKB"/>
</dbReference>
<dbReference type="GO" id="GO:0007613">
    <property type="term" value="P:memory"/>
    <property type="evidence" value="ECO:0000250"/>
    <property type="project" value="UniProtKB"/>
</dbReference>
<dbReference type="GO" id="GO:0001818">
    <property type="term" value="P:negative regulation of cytokine production"/>
    <property type="evidence" value="ECO:0000250"/>
    <property type="project" value="UniProtKB"/>
</dbReference>
<dbReference type="GO" id="GO:0033602">
    <property type="term" value="P:negative regulation of dopamine secretion"/>
    <property type="evidence" value="ECO:0000250"/>
    <property type="project" value="UniProtKB"/>
</dbReference>
<dbReference type="GO" id="GO:0045806">
    <property type="term" value="P:negative regulation of endocytosis"/>
    <property type="evidence" value="ECO:0000250"/>
    <property type="project" value="UniProtKB"/>
</dbReference>
<dbReference type="GO" id="GO:0032715">
    <property type="term" value="P:negative regulation of interleukin-6 production"/>
    <property type="evidence" value="ECO:0000250"/>
    <property type="project" value="UniProtKB"/>
</dbReference>
<dbReference type="GO" id="GO:1903979">
    <property type="term" value="P:negative regulation of microglial cell activation"/>
    <property type="evidence" value="ECO:0000250"/>
    <property type="project" value="UniProtKB"/>
</dbReference>
<dbReference type="GO" id="GO:0046929">
    <property type="term" value="P:negative regulation of neurotransmitter secretion"/>
    <property type="evidence" value="ECO:0000304"/>
    <property type="project" value="ParkinsonsUK-UCL"/>
</dbReference>
<dbReference type="GO" id="GO:0050765">
    <property type="term" value="P:negative regulation of phagocytosis"/>
    <property type="evidence" value="ECO:0000250"/>
    <property type="project" value="UniProtKB"/>
</dbReference>
<dbReference type="GO" id="GO:0032720">
    <property type="term" value="P:negative regulation of tumor necrosis factor production"/>
    <property type="evidence" value="ECO:0000250"/>
    <property type="project" value="UniProtKB"/>
</dbReference>
<dbReference type="GO" id="GO:0001778">
    <property type="term" value="P:plasma membrane repair"/>
    <property type="evidence" value="ECO:0000250"/>
    <property type="project" value="ParkinsonsUK-UCL"/>
</dbReference>
<dbReference type="GO" id="GO:1905171">
    <property type="term" value="P:positive regulation of protein localization to phagocytic vesicle"/>
    <property type="evidence" value="ECO:0000250"/>
    <property type="project" value="ParkinsonsUK-UCL"/>
</dbReference>
<dbReference type="GO" id="GO:0017158">
    <property type="term" value="P:regulation of calcium ion-dependent exocytosis"/>
    <property type="evidence" value="ECO:0000318"/>
    <property type="project" value="GO_Central"/>
</dbReference>
<dbReference type="GO" id="GO:1900424">
    <property type="term" value="P:regulation of defense response to bacterium"/>
    <property type="evidence" value="ECO:0007669"/>
    <property type="project" value="Ensembl"/>
</dbReference>
<dbReference type="GO" id="GO:1905162">
    <property type="term" value="P:regulation of phagosome maturation"/>
    <property type="evidence" value="ECO:0000305"/>
    <property type="project" value="ParkinsonsUK-UCL"/>
</dbReference>
<dbReference type="GO" id="GO:1900242">
    <property type="term" value="P:regulation of synaptic vesicle endocytosis"/>
    <property type="evidence" value="ECO:0007669"/>
    <property type="project" value="Ensembl"/>
</dbReference>
<dbReference type="GO" id="GO:0006906">
    <property type="term" value="P:vesicle fusion"/>
    <property type="evidence" value="ECO:0000318"/>
    <property type="project" value="GO_Central"/>
</dbReference>
<dbReference type="GO" id="GO:0016192">
    <property type="term" value="P:vesicle-mediated transport"/>
    <property type="evidence" value="ECO:0000318"/>
    <property type="project" value="GO_Central"/>
</dbReference>
<dbReference type="CDD" id="cd08388">
    <property type="entry name" value="C2A_Synaptotagmin-4-11"/>
    <property type="match status" value="1"/>
</dbReference>
<dbReference type="CDD" id="cd08404">
    <property type="entry name" value="C2B_Synaptotagmin-4"/>
    <property type="match status" value="1"/>
</dbReference>
<dbReference type="FunFam" id="2.60.40.150:FF:000039">
    <property type="entry name" value="Synaptotagmin 11"/>
    <property type="match status" value="1"/>
</dbReference>
<dbReference type="FunFam" id="2.60.40.150:FF:000051">
    <property type="entry name" value="Synaptotagmin 11"/>
    <property type="match status" value="1"/>
</dbReference>
<dbReference type="Gene3D" id="2.60.40.150">
    <property type="entry name" value="C2 domain"/>
    <property type="match status" value="2"/>
</dbReference>
<dbReference type="InterPro" id="IPR000008">
    <property type="entry name" value="C2_dom"/>
</dbReference>
<dbReference type="InterPro" id="IPR035892">
    <property type="entry name" value="C2_domain_sf"/>
</dbReference>
<dbReference type="InterPro" id="IPR001565">
    <property type="entry name" value="Synaptotagmin"/>
</dbReference>
<dbReference type="PANTHER" id="PTHR10024">
    <property type="entry name" value="SYNAPTOTAGMIN"/>
    <property type="match status" value="1"/>
</dbReference>
<dbReference type="PANTHER" id="PTHR10024:SF115">
    <property type="entry name" value="SYNAPTOTAGMIN-11"/>
    <property type="match status" value="1"/>
</dbReference>
<dbReference type="Pfam" id="PF00168">
    <property type="entry name" value="C2"/>
    <property type="match status" value="2"/>
</dbReference>
<dbReference type="PRINTS" id="PR00399">
    <property type="entry name" value="SYNAPTOTAGMN"/>
</dbReference>
<dbReference type="SMART" id="SM00239">
    <property type="entry name" value="C2"/>
    <property type="match status" value="2"/>
</dbReference>
<dbReference type="SUPFAM" id="SSF49562">
    <property type="entry name" value="C2 domain (Calcium/lipid-binding domain, CaLB)"/>
    <property type="match status" value="2"/>
</dbReference>
<dbReference type="PROSITE" id="PS50004">
    <property type="entry name" value="C2"/>
    <property type="match status" value="2"/>
</dbReference>
<organism>
    <name type="scientific">Homo sapiens</name>
    <name type="common">Human</name>
    <dbReference type="NCBI Taxonomy" id="9606"/>
    <lineage>
        <taxon>Eukaryota</taxon>
        <taxon>Metazoa</taxon>
        <taxon>Chordata</taxon>
        <taxon>Craniata</taxon>
        <taxon>Vertebrata</taxon>
        <taxon>Euteleostomi</taxon>
        <taxon>Mammalia</taxon>
        <taxon>Eutheria</taxon>
        <taxon>Euarchontoglires</taxon>
        <taxon>Primates</taxon>
        <taxon>Haplorrhini</taxon>
        <taxon>Catarrhini</taxon>
        <taxon>Hominidae</taxon>
        <taxon>Homo</taxon>
    </lineage>
</organism>
<accession>Q9BT88</accession>
<accession>Q14998</accession>
<accession>Q5W0D4</accession>
<accession>Q68CT5</accession>
<accession>Q8IXU3</accession>
<accession>Q96SU2</accession>
<gene>
    <name evidence="14" type="primary">SYT11</name>
    <name type="synonym">KIAA0080</name>
</gene>
<protein>
    <recommendedName>
        <fullName evidence="12">Synaptotagmin-11</fullName>
    </recommendedName>
    <alternativeName>
        <fullName>Synaptotagmin XI</fullName>
        <shortName>SytXI</shortName>
    </alternativeName>
</protein>
<keyword id="KW-0106">Calcium</keyword>
<keyword id="KW-0966">Cell projection</keyword>
<keyword id="KW-0968">Cytoplasmic vesicle</keyword>
<keyword id="KW-0967">Endosome</keyword>
<keyword id="KW-0333">Golgi apparatus</keyword>
<keyword id="KW-0458">Lysosome</keyword>
<keyword id="KW-0472">Membrane</keyword>
<keyword id="KW-0479">Metal-binding</keyword>
<keyword id="KW-0597">Phosphoprotein</keyword>
<keyword id="KW-1267">Proteomics identification</keyword>
<keyword id="KW-1185">Reference proteome</keyword>
<keyword id="KW-0677">Repeat</keyword>
<keyword id="KW-0770">Synapse</keyword>
<keyword id="KW-0812">Transmembrane</keyword>
<keyword id="KW-1133">Transmembrane helix</keyword>
<keyword id="KW-0832">Ubl conjugation</keyword>
<sequence length="431" mass="48297">MAEITNIRPSFDVSPVVAGLIGASVLVVCVSVTVFVWSCCHQQAEKKQKNPPYKFIHMLKGISIYPETLSNKKKIIKVRRDKDGPGREGGRRNLLVDAAEAGLLSRDKDPRGPSSGSCIDQLPIKMDYGEELRSPITSLTPGESKTTSPSSPEEDVMLGSLTFSVDYNFPKKALVVTIQEAHGLPVMDDQTQGSDPYIKMTILPDKRHRVKTRVLRKTLDPVFDETFTFYGIPYSQLQDLVLHFLVLSFDRFSRDDVIGEVMVPLAGVDPSTGKVQLTRDIIKRNIQKCISRGELQVSLSYQPVAQRMTVVVLKARHLPKMDITGLSGNPYVKVNVYYGRKRIAKKKTHVKKCTLNPIFNESFIYDIPTDLLPDISIEFLVIDFDRTTKNEVVGRLILGAHSVTASGAEHWREVCESPRKPVAKWHSLSEY</sequence>
<proteinExistence type="evidence at protein level"/>